<gene>
    <name type="primary">gabD1</name>
    <name type="ordered locus">MAP_3673c</name>
</gene>
<feature type="chain" id="PRO_0000310704" description="Succinate-semialdehyde dehydrogenase [NADP(+)]">
    <location>
        <begin position="1"/>
        <end position="472"/>
    </location>
</feature>
<feature type="active site" description="Proton acceptor" evidence="2">
    <location>
        <position position="232"/>
    </location>
</feature>
<feature type="active site" description="Nucleophile" evidence="2">
    <location>
        <position position="266"/>
    </location>
</feature>
<feature type="binding site" evidence="1">
    <location>
        <begin position="134"/>
        <end position="135"/>
    </location>
    <ligand>
        <name>NADP(+)</name>
        <dbReference type="ChEBI" id="CHEBI:58349"/>
    </ligand>
</feature>
<feature type="binding site" evidence="1">
    <location>
        <begin position="158"/>
        <end position="161"/>
    </location>
    <ligand>
        <name>NADP(+)</name>
        <dbReference type="ChEBI" id="CHEBI:58349"/>
    </ligand>
</feature>
<feature type="binding site" evidence="1">
    <location>
        <begin position="210"/>
        <end position="211"/>
    </location>
    <ligand>
        <name>NADP(+)</name>
        <dbReference type="ChEBI" id="CHEBI:58349"/>
    </ligand>
</feature>
<feature type="binding site" evidence="1">
    <location>
        <position position="233"/>
    </location>
    <ligand>
        <name>NADP(+)</name>
        <dbReference type="ChEBI" id="CHEBI:58349"/>
    </ligand>
</feature>
<feature type="binding site" evidence="1">
    <location>
        <position position="363"/>
    </location>
    <ligand>
        <name>NADP(+)</name>
        <dbReference type="ChEBI" id="CHEBI:58349"/>
    </ligand>
</feature>
<protein>
    <recommendedName>
        <fullName>Succinate-semialdehyde dehydrogenase [NADP(+)]</fullName>
        <shortName>SSADH</shortName>
        <shortName>SSDH</shortName>
        <ecNumber>1.2.1.79</ecNumber>
    </recommendedName>
</protein>
<name>GABD1_MYCPA</name>
<evidence type="ECO:0000250" key="1"/>
<evidence type="ECO:0000255" key="2">
    <source>
        <dbReference type="PROSITE-ProRule" id="PRU10008"/>
    </source>
</evidence>
<evidence type="ECO:0000305" key="3"/>
<sequence length="472" mass="49980">MPIATINPATGETVKTFTPASDAEVDAAIARAYERFLDYRHSTTFAQRAQWANATADLLEAEADEVAAMMTLEMGKTLKSAKAEALKCAKGFRYYAQNAEQLLADEPADAGKVGAARAYIRYQPLGVVLAVMPWNFPLWQAVRFAAPALMAGNVGILKHASNVPQSALYLADVITRGGFPEGCFQTLLVPSSAVERILRDPRVAAATLTGSEPAGQSVAAIAGDEIKPTVLELGGSDPFIVMPSADLDEAVKTAVTARVQNNGQSCIAAKRFIVHTDIYDAFVDKFVEQMKALKVGDPTDPATDVGPLATESGRDEIAKQVDDAVAAGATLRCGGKPLDGPGWFYPPTVVTDITKDMALYTEEVFGPVASMYRAADIDEAIEIANATTFGLGSNAWTNDAAEQQRFIDDIEAGQVFINGMTVSYPELGFGGVKRSGYGRELAGLGIRAFCNAKTVWIGSSKSGDAGGGSKVE</sequence>
<accession>Q73TP5</accession>
<comment type="function">
    <text evidence="1">Catalyzes the NADP(+)-dependent oxidation of succinate semialdehyde to succinate. It is believed to be the main source of succinate semialdehyde dehydrogenase activity in Mycobacterium (By similarity).</text>
</comment>
<comment type="catalytic activity">
    <reaction>
        <text>succinate semialdehyde + NADP(+) + H2O = succinate + NADPH + 2 H(+)</text>
        <dbReference type="Rhea" id="RHEA:13213"/>
        <dbReference type="ChEBI" id="CHEBI:15377"/>
        <dbReference type="ChEBI" id="CHEBI:15378"/>
        <dbReference type="ChEBI" id="CHEBI:30031"/>
        <dbReference type="ChEBI" id="CHEBI:57706"/>
        <dbReference type="ChEBI" id="CHEBI:57783"/>
        <dbReference type="ChEBI" id="CHEBI:58349"/>
        <dbReference type="EC" id="1.2.1.79"/>
    </reaction>
</comment>
<comment type="similarity">
    <text evidence="3">Belongs to the aldehyde dehydrogenase family.</text>
</comment>
<organism>
    <name type="scientific">Mycolicibacterium paratuberculosis (strain ATCC BAA-968 / K-10)</name>
    <name type="common">Mycobacterium paratuberculosis</name>
    <dbReference type="NCBI Taxonomy" id="262316"/>
    <lineage>
        <taxon>Bacteria</taxon>
        <taxon>Bacillati</taxon>
        <taxon>Actinomycetota</taxon>
        <taxon>Actinomycetes</taxon>
        <taxon>Mycobacteriales</taxon>
        <taxon>Mycobacteriaceae</taxon>
        <taxon>Mycobacterium</taxon>
        <taxon>Mycobacterium avium complex (MAC)</taxon>
    </lineage>
</organism>
<proteinExistence type="inferred from homology"/>
<dbReference type="EC" id="1.2.1.79"/>
<dbReference type="EMBL" id="AE016958">
    <property type="protein sequence ID" value="AAS06223.1"/>
    <property type="molecule type" value="Genomic_DNA"/>
</dbReference>
<dbReference type="RefSeq" id="WP_003874063.1">
    <property type="nucleotide sequence ID" value="NZ_CP106873.1"/>
</dbReference>
<dbReference type="SMR" id="Q73TP5"/>
<dbReference type="STRING" id="262316.MAP_3673c"/>
<dbReference type="KEGG" id="mpa:MAP_3673c"/>
<dbReference type="eggNOG" id="COG1012">
    <property type="taxonomic scope" value="Bacteria"/>
</dbReference>
<dbReference type="HOGENOM" id="CLU_005391_5_1_11"/>
<dbReference type="Proteomes" id="UP000000580">
    <property type="component" value="Chromosome"/>
</dbReference>
<dbReference type="GO" id="GO:0004030">
    <property type="term" value="F:aldehyde dehydrogenase [NAD(P)+] activity"/>
    <property type="evidence" value="ECO:0007669"/>
    <property type="project" value="InterPro"/>
</dbReference>
<dbReference type="GO" id="GO:0004777">
    <property type="term" value="F:succinate-semialdehyde dehydrogenase (NAD+) activity"/>
    <property type="evidence" value="ECO:0007669"/>
    <property type="project" value="TreeGrafter"/>
</dbReference>
<dbReference type="GO" id="GO:0036243">
    <property type="term" value="F:succinate-semialdehyde dehydrogenase (NADP+) activity"/>
    <property type="evidence" value="ECO:0007669"/>
    <property type="project" value="UniProtKB-EC"/>
</dbReference>
<dbReference type="GO" id="GO:0006099">
    <property type="term" value="P:tricarboxylic acid cycle"/>
    <property type="evidence" value="ECO:0007669"/>
    <property type="project" value="UniProtKB-KW"/>
</dbReference>
<dbReference type="CDD" id="cd07100">
    <property type="entry name" value="ALDH_SSADH1_GabD1"/>
    <property type="match status" value="1"/>
</dbReference>
<dbReference type="FunFam" id="3.40.309.10:FF:000010">
    <property type="entry name" value="Gamma-aminobutyraldehyde dehydrogenase"/>
    <property type="match status" value="1"/>
</dbReference>
<dbReference type="FunFam" id="3.40.605.10:FF:000012">
    <property type="entry name" value="NAD-dependent succinate-semialdehyde dehydrogenase"/>
    <property type="match status" value="1"/>
</dbReference>
<dbReference type="Gene3D" id="3.40.605.10">
    <property type="entry name" value="Aldehyde Dehydrogenase, Chain A, domain 1"/>
    <property type="match status" value="1"/>
</dbReference>
<dbReference type="Gene3D" id="3.40.309.10">
    <property type="entry name" value="Aldehyde Dehydrogenase, Chain A, domain 2"/>
    <property type="match status" value="1"/>
</dbReference>
<dbReference type="InterPro" id="IPR016161">
    <property type="entry name" value="Ald_DH/histidinol_DH"/>
</dbReference>
<dbReference type="InterPro" id="IPR016163">
    <property type="entry name" value="Ald_DH_C"/>
</dbReference>
<dbReference type="InterPro" id="IPR016160">
    <property type="entry name" value="Ald_DH_CS_CYS"/>
</dbReference>
<dbReference type="InterPro" id="IPR016162">
    <property type="entry name" value="Ald_DH_N"/>
</dbReference>
<dbReference type="InterPro" id="IPR015590">
    <property type="entry name" value="Aldehyde_DH_dom"/>
</dbReference>
<dbReference type="InterPro" id="IPR044148">
    <property type="entry name" value="ALDH_GabD1-like"/>
</dbReference>
<dbReference type="InterPro" id="IPR047110">
    <property type="entry name" value="GABD/Sad-like"/>
</dbReference>
<dbReference type="NCBIfam" id="NF006915">
    <property type="entry name" value="PRK09406.1"/>
    <property type="match status" value="1"/>
</dbReference>
<dbReference type="PANTHER" id="PTHR43217">
    <property type="entry name" value="SUCCINATE SEMIALDEHYDE DEHYDROGENASE [NAD(P)+] SAD"/>
    <property type="match status" value="1"/>
</dbReference>
<dbReference type="PANTHER" id="PTHR43217:SF1">
    <property type="entry name" value="SUCCINATE SEMIALDEHYDE DEHYDROGENASE [NAD(P)+] SAD"/>
    <property type="match status" value="1"/>
</dbReference>
<dbReference type="Pfam" id="PF00171">
    <property type="entry name" value="Aldedh"/>
    <property type="match status" value="1"/>
</dbReference>
<dbReference type="SUPFAM" id="SSF53720">
    <property type="entry name" value="ALDH-like"/>
    <property type="match status" value="1"/>
</dbReference>
<dbReference type="PROSITE" id="PS00070">
    <property type="entry name" value="ALDEHYDE_DEHYDR_CYS"/>
    <property type="match status" value="1"/>
</dbReference>
<keyword id="KW-0521">NADP</keyword>
<keyword id="KW-0560">Oxidoreductase</keyword>
<keyword id="KW-1185">Reference proteome</keyword>
<keyword id="KW-0816">Tricarboxylic acid cycle</keyword>
<reference key="1">
    <citation type="journal article" date="2005" name="Proc. Natl. Acad. Sci. U.S.A.">
        <title>The complete genome sequence of Mycobacterium avium subspecies paratuberculosis.</title>
        <authorList>
            <person name="Li L."/>
            <person name="Bannantine J.P."/>
            <person name="Zhang Q."/>
            <person name="Amonsin A."/>
            <person name="May B.J."/>
            <person name="Alt D."/>
            <person name="Banerji N."/>
            <person name="Kanjilal S."/>
            <person name="Kapur V."/>
        </authorList>
    </citation>
    <scope>NUCLEOTIDE SEQUENCE [LARGE SCALE GENOMIC DNA]</scope>
    <source>
        <strain>ATCC BAA-968 / K-10</strain>
    </source>
</reference>